<proteinExistence type="evidence at transcript level"/>
<accession>P79150</accession>
<evidence type="ECO:0000250" key="1"/>
<evidence type="ECO:0000255" key="2"/>
<evidence type="ECO:0000305" key="3"/>
<protein>
    <recommendedName>
        <fullName>Fibroblast growth factor 7</fullName>
        <shortName>FGF-7</shortName>
    </recommendedName>
    <alternativeName>
        <fullName>Heparin-binding growth factor 7</fullName>
        <shortName>HBGF-7</shortName>
    </alternativeName>
    <alternativeName>
        <fullName>Keratinocyte growth factor</fullName>
    </alternativeName>
</protein>
<organism>
    <name type="scientific">Canis lupus familiaris</name>
    <name type="common">Dog</name>
    <name type="synonym">Canis familiaris</name>
    <dbReference type="NCBI Taxonomy" id="9615"/>
    <lineage>
        <taxon>Eukaryota</taxon>
        <taxon>Metazoa</taxon>
        <taxon>Chordata</taxon>
        <taxon>Craniata</taxon>
        <taxon>Vertebrata</taxon>
        <taxon>Euteleostomi</taxon>
        <taxon>Mammalia</taxon>
        <taxon>Eutheria</taxon>
        <taxon>Laurasiatheria</taxon>
        <taxon>Carnivora</taxon>
        <taxon>Caniformia</taxon>
        <taxon>Canidae</taxon>
        <taxon>Canis</taxon>
    </lineage>
</organism>
<keyword id="KW-0325">Glycoprotein</keyword>
<keyword id="KW-0339">Growth factor</keyword>
<keyword id="KW-0358">Heparin-binding</keyword>
<keyword id="KW-0497">Mitogen</keyword>
<keyword id="KW-1185">Reference proteome</keyword>
<keyword id="KW-0964">Secreted</keyword>
<keyword id="KW-0732">Signal</keyword>
<feature type="signal peptide" evidence="1">
    <location>
        <begin position="1"/>
        <end position="31"/>
    </location>
</feature>
<feature type="chain" id="PRO_0000008963" description="Fibroblast growth factor 7">
    <location>
        <begin position="32"/>
        <end position="194"/>
    </location>
</feature>
<feature type="glycosylation site" description="N-linked (GlcNAc...) asparagine" evidence="2">
    <location>
        <position position="45"/>
    </location>
</feature>
<name>FGF7_CANLF</name>
<sequence length="194" mass="22476">MRKWILTWILPTLLYRSCFHIICLVGTISLACNDMTPEQMATNVNCSSPERHTRSYDYMEGGDIRVRRLFCRTQWYLRIDKRGKVKGTQEMKNSYNIMEIRTVAVGIVAIKGVESEYYLAMNKEGKLYAKKECNEDCNFKELILENHYNTYASAKWTHSGGEMFVALNQKGVPVRGKKTKKEQKTAHFLPMAIT</sequence>
<comment type="function">
    <text evidence="1">Plays an important role in the regulation of embryonic development, cell proliferation and cell differentiation. Required for normal branching morphogenesis. Growth factor active on keratinocytes. Possible major paracrine effector of normal epithelial cell proliferation (By similarity).</text>
</comment>
<comment type="subunit">
    <text evidence="1">Interacts with FGFBP1. Interacts with FGFR2. Affinity between fibroblast growth factors (FGFs) and their receptors is increased by heparan sulfate glycosaminoglycans that function as coreceptors (By similarity).</text>
</comment>
<comment type="subcellular location">
    <subcellularLocation>
        <location>Secreted</location>
    </subcellularLocation>
</comment>
<comment type="similarity">
    <text evidence="3">Belongs to the heparin-binding growth factors family.</text>
</comment>
<gene>
    <name type="primary">FGF7</name>
    <name type="synonym">KGF</name>
</gene>
<reference key="1">
    <citation type="journal article" date="1996" name="DNA Cell Biol.">
        <title>Keratinocyte growth factor (KGF/FGF-7) has a paracrine role in canine prostate: molecular cloning of mRNA encoding canine KGF.</title>
        <authorList>
            <person name="Canatan H."/>
            <person name="Chang W.Y."/>
            <person name="Sugimoto Y."/>
            <person name="Shidaifat F."/>
            <person name="Kulp S.K."/>
            <person name="Brueggemeier R.W."/>
            <person name="Lin Y.C."/>
        </authorList>
    </citation>
    <scope>NUCLEOTIDE SEQUENCE [MRNA]</scope>
</reference>
<dbReference type="EMBL" id="U80800">
    <property type="protein sequence ID" value="AAB38972.1"/>
    <property type="molecule type" value="mRNA"/>
</dbReference>
<dbReference type="RefSeq" id="NP_001003237.1">
    <property type="nucleotide sequence ID" value="NM_001003237.1"/>
</dbReference>
<dbReference type="RefSeq" id="XP_005638232.1">
    <property type="nucleotide sequence ID" value="XM_005638175.2"/>
</dbReference>
<dbReference type="RefSeq" id="XP_038297661.1">
    <property type="nucleotide sequence ID" value="XM_038441733.1"/>
</dbReference>
<dbReference type="SMR" id="P79150"/>
<dbReference type="FunCoup" id="P79150">
    <property type="interactions" value="233"/>
</dbReference>
<dbReference type="STRING" id="9615.ENSCAFP00000021986"/>
<dbReference type="GlyCosmos" id="P79150">
    <property type="glycosylation" value="1 site, No reported glycans"/>
</dbReference>
<dbReference type="PaxDb" id="9612-ENSCAFP00000021986"/>
<dbReference type="Ensembl" id="ENSCAFT00000023682.5">
    <property type="protein sequence ID" value="ENSCAFP00000021986.3"/>
    <property type="gene ID" value="ENSCAFG00000014895.5"/>
</dbReference>
<dbReference type="Ensembl" id="ENSCAFT00030013677.1">
    <property type="protein sequence ID" value="ENSCAFP00030011936.1"/>
    <property type="gene ID" value="ENSCAFG00030007447.1"/>
</dbReference>
<dbReference type="Ensembl" id="ENSCAFT00040036077.1">
    <property type="protein sequence ID" value="ENSCAFP00040031417.1"/>
    <property type="gene ID" value="ENSCAFG00040019496.1"/>
</dbReference>
<dbReference type="Ensembl" id="ENSCAFT00845039189.1">
    <property type="protein sequence ID" value="ENSCAFP00845030694.1"/>
    <property type="gene ID" value="ENSCAFG00845022021.1"/>
</dbReference>
<dbReference type="GeneID" id="403915"/>
<dbReference type="KEGG" id="cfa:403915"/>
<dbReference type="CTD" id="2252"/>
<dbReference type="VEuPathDB" id="HostDB:ENSCAFG00845022021"/>
<dbReference type="VGNC" id="VGNC:41082">
    <property type="gene designation" value="GALK2"/>
</dbReference>
<dbReference type="eggNOG" id="KOG3885">
    <property type="taxonomic scope" value="Eukaryota"/>
</dbReference>
<dbReference type="GeneTree" id="ENSGT00950000183187"/>
<dbReference type="HOGENOM" id="CLU_081609_3_1_1"/>
<dbReference type="InParanoid" id="P79150"/>
<dbReference type="OMA" id="QYYICMN"/>
<dbReference type="OrthoDB" id="187738at2759"/>
<dbReference type="TreeFam" id="TF317805"/>
<dbReference type="Reactome" id="R-CFA-109704">
    <property type="pathway name" value="PI3K Cascade"/>
</dbReference>
<dbReference type="Reactome" id="R-CFA-1257604">
    <property type="pathway name" value="PIP3 activates AKT signaling"/>
</dbReference>
<dbReference type="Reactome" id="R-CFA-190377">
    <property type="pathway name" value="FGFR2b ligand binding and activation"/>
</dbReference>
<dbReference type="Reactome" id="R-CFA-5654221">
    <property type="pathway name" value="Phospholipase C-mediated cascade, FGFR2"/>
</dbReference>
<dbReference type="Reactome" id="R-CFA-5654695">
    <property type="pathway name" value="PI-3K cascade:FGFR2"/>
</dbReference>
<dbReference type="Reactome" id="R-CFA-5654699">
    <property type="pathway name" value="SHC-mediated cascade:FGFR2"/>
</dbReference>
<dbReference type="Reactome" id="R-CFA-5654700">
    <property type="pathway name" value="FRS-mediated FGFR2 signaling"/>
</dbReference>
<dbReference type="Reactome" id="R-CFA-5654727">
    <property type="pathway name" value="Negative regulation of FGFR2 signaling"/>
</dbReference>
<dbReference type="Reactome" id="R-CFA-5673001">
    <property type="pathway name" value="RAF/MAP kinase cascade"/>
</dbReference>
<dbReference type="Reactome" id="R-CFA-6811558">
    <property type="pathway name" value="PI5P, PP2A and IER3 Regulate PI3K/AKT Signaling"/>
</dbReference>
<dbReference type="Proteomes" id="UP000002254">
    <property type="component" value="Chromosome 30"/>
</dbReference>
<dbReference type="Proteomes" id="UP000694429">
    <property type="component" value="Chromosome 30"/>
</dbReference>
<dbReference type="Proteomes" id="UP000694542">
    <property type="component" value="Chromosome 30"/>
</dbReference>
<dbReference type="Proteomes" id="UP000805418">
    <property type="component" value="Chromosome 30"/>
</dbReference>
<dbReference type="Bgee" id="ENSCAFG00000014923">
    <property type="expression patterns" value="Expressed in bone marrow and 45 other cell types or tissues"/>
</dbReference>
<dbReference type="GO" id="GO:0005576">
    <property type="term" value="C:extracellular region"/>
    <property type="evidence" value="ECO:0007669"/>
    <property type="project" value="UniProtKB-SubCell"/>
</dbReference>
<dbReference type="GO" id="GO:0008083">
    <property type="term" value="F:growth factor activity"/>
    <property type="evidence" value="ECO:0007669"/>
    <property type="project" value="UniProtKB-KW"/>
</dbReference>
<dbReference type="GO" id="GO:0008201">
    <property type="term" value="F:heparin binding"/>
    <property type="evidence" value="ECO:0007669"/>
    <property type="project" value="UniProtKB-KW"/>
</dbReference>
<dbReference type="GO" id="GO:0051781">
    <property type="term" value="P:positive regulation of cell division"/>
    <property type="evidence" value="ECO:0007669"/>
    <property type="project" value="UniProtKB-KW"/>
</dbReference>
<dbReference type="CDD" id="cd23319">
    <property type="entry name" value="beta-trefoil_FGF7"/>
    <property type="match status" value="1"/>
</dbReference>
<dbReference type="FunFam" id="2.80.10.50:FF:000004">
    <property type="entry name" value="Fibroblast growth factor"/>
    <property type="match status" value="1"/>
</dbReference>
<dbReference type="Gene3D" id="2.80.10.50">
    <property type="match status" value="1"/>
</dbReference>
<dbReference type="InterPro" id="IPR002209">
    <property type="entry name" value="Fibroblast_GF_fam"/>
</dbReference>
<dbReference type="InterPro" id="IPR008996">
    <property type="entry name" value="IL1/FGF"/>
</dbReference>
<dbReference type="PANTHER" id="PTHR11486">
    <property type="entry name" value="FIBROBLAST GROWTH FACTOR"/>
    <property type="match status" value="1"/>
</dbReference>
<dbReference type="Pfam" id="PF00167">
    <property type="entry name" value="FGF"/>
    <property type="match status" value="1"/>
</dbReference>
<dbReference type="PRINTS" id="PR00263">
    <property type="entry name" value="HBGFFGF"/>
</dbReference>
<dbReference type="PRINTS" id="PR00262">
    <property type="entry name" value="IL1HBGF"/>
</dbReference>
<dbReference type="SMART" id="SM00442">
    <property type="entry name" value="FGF"/>
    <property type="match status" value="1"/>
</dbReference>
<dbReference type="SUPFAM" id="SSF50353">
    <property type="entry name" value="Cytokine"/>
    <property type="match status" value="1"/>
</dbReference>
<dbReference type="PROSITE" id="PS00247">
    <property type="entry name" value="HBGF_FGF"/>
    <property type="match status" value="1"/>
</dbReference>